<proteinExistence type="inferred from homology"/>
<organism>
    <name type="scientific">Bifidobacterium adolescentis (strain ATCC 15703 / DSM 20083 / NCTC 11814 / E194a)</name>
    <dbReference type="NCBI Taxonomy" id="367928"/>
    <lineage>
        <taxon>Bacteria</taxon>
        <taxon>Bacillati</taxon>
        <taxon>Actinomycetota</taxon>
        <taxon>Actinomycetes</taxon>
        <taxon>Bifidobacteriales</taxon>
        <taxon>Bifidobacteriaceae</taxon>
        <taxon>Bifidobacterium</taxon>
    </lineage>
</organism>
<keyword id="KW-0131">Cell cycle</keyword>
<keyword id="KW-0132">Cell division</keyword>
<keyword id="KW-0963">Cytoplasm</keyword>
<keyword id="KW-1185">Reference proteome</keyword>
<keyword id="KW-0717">Septation</keyword>
<reference key="1">
    <citation type="submission" date="2006-12" db="EMBL/GenBank/DDBJ databases">
        <title>Bifidobacterium adolescentis complete genome sequence.</title>
        <authorList>
            <person name="Suzuki T."/>
            <person name="Tsuda Y."/>
            <person name="Kanou N."/>
            <person name="Inoue T."/>
            <person name="Kumazaki K."/>
            <person name="Nagano S."/>
            <person name="Hirai S."/>
            <person name="Tanaka K."/>
            <person name="Watanabe K."/>
        </authorList>
    </citation>
    <scope>NUCLEOTIDE SEQUENCE [LARGE SCALE GENOMIC DNA]</scope>
    <source>
        <strain>ATCC 15703 / DSM 20083 / NCTC 11814 / E194a</strain>
    </source>
</reference>
<name>SEPF_BIFAA</name>
<protein>
    <recommendedName>
        <fullName evidence="1">Cell division protein SepF</fullName>
    </recommendedName>
</protein>
<evidence type="ECO:0000255" key="1">
    <source>
        <dbReference type="HAMAP-Rule" id="MF_01197"/>
    </source>
</evidence>
<evidence type="ECO:0000256" key="2">
    <source>
        <dbReference type="SAM" id="MobiDB-lite"/>
    </source>
</evidence>
<gene>
    <name evidence="1" type="primary">sepF</name>
    <name type="ordered locus">BAD_1135</name>
</gene>
<sequence>MAGFMKNAMSYLGMSDVAEGEDDFEDDVDTGETSFDSDHSVTPMPSSSASASTPSAPREQSNPFQGGRVSRITTIHPKTYDDAQMVGRAIRDGIPVVLNLTGVAEAVAYRIVDFSAGVVFGVRGSIERVTPRVFLLSPAQVNIKVEEPEDKGPAHDLFAD</sequence>
<dbReference type="EMBL" id="AP009256">
    <property type="protein sequence ID" value="BAF39916.1"/>
    <property type="molecule type" value="Genomic_DNA"/>
</dbReference>
<dbReference type="RefSeq" id="WP_011743470.1">
    <property type="nucleotide sequence ID" value="NZ_CAXVNC010000002.1"/>
</dbReference>
<dbReference type="SMR" id="A1A2I3"/>
<dbReference type="STRING" id="367928.BAD_1135"/>
<dbReference type="PaxDb" id="1680-BADO_1193"/>
<dbReference type="GeneID" id="4556110"/>
<dbReference type="KEGG" id="bad:BAD_1135"/>
<dbReference type="HOGENOM" id="CLU_078499_0_2_11"/>
<dbReference type="Proteomes" id="UP000008702">
    <property type="component" value="Chromosome"/>
</dbReference>
<dbReference type="GO" id="GO:0005737">
    <property type="term" value="C:cytoplasm"/>
    <property type="evidence" value="ECO:0007669"/>
    <property type="project" value="UniProtKB-SubCell"/>
</dbReference>
<dbReference type="GO" id="GO:0000917">
    <property type="term" value="P:division septum assembly"/>
    <property type="evidence" value="ECO:0007669"/>
    <property type="project" value="UniProtKB-KW"/>
</dbReference>
<dbReference type="GO" id="GO:0043093">
    <property type="term" value="P:FtsZ-dependent cytokinesis"/>
    <property type="evidence" value="ECO:0007669"/>
    <property type="project" value="UniProtKB-UniRule"/>
</dbReference>
<dbReference type="Gene3D" id="3.30.110.150">
    <property type="entry name" value="SepF-like protein"/>
    <property type="match status" value="1"/>
</dbReference>
<dbReference type="HAMAP" id="MF_01197">
    <property type="entry name" value="SepF"/>
    <property type="match status" value="1"/>
</dbReference>
<dbReference type="InterPro" id="IPR023052">
    <property type="entry name" value="Cell_div_SepF"/>
</dbReference>
<dbReference type="InterPro" id="IPR007561">
    <property type="entry name" value="Cell_div_SepF/SepF-rel"/>
</dbReference>
<dbReference type="InterPro" id="IPR038594">
    <property type="entry name" value="SepF-like_sf"/>
</dbReference>
<dbReference type="PANTHER" id="PTHR35798">
    <property type="entry name" value="CELL DIVISION PROTEIN SEPF"/>
    <property type="match status" value="1"/>
</dbReference>
<dbReference type="PANTHER" id="PTHR35798:SF1">
    <property type="entry name" value="CELL DIVISION PROTEIN SEPF"/>
    <property type="match status" value="1"/>
</dbReference>
<dbReference type="Pfam" id="PF04472">
    <property type="entry name" value="SepF"/>
    <property type="match status" value="1"/>
</dbReference>
<feature type="chain" id="PRO_0000333987" description="Cell division protein SepF">
    <location>
        <begin position="1"/>
        <end position="160"/>
    </location>
</feature>
<feature type="region of interest" description="Disordered" evidence="2">
    <location>
        <begin position="18"/>
        <end position="72"/>
    </location>
</feature>
<feature type="compositionally biased region" description="Acidic residues" evidence="2">
    <location>
        <begin position="18"/>
        <end position="30"/>
    </location>
</feature>
<feature type="compositionally biased region" description="Low complexity" evidence="2">
    <location>
        <begin position="45"/>
        <end position="57"/>
    </location>
</feature>
<accession>A1A2I3</accession>
<comment type="function">
    <text evidence="1">Cell division protein that is part of the divisome complex and is recruited early to the Z-ring. Probably stimulates Z-ring formation, perhaps through the cross-linking of FtsZ protofilaments. Its function overlaps with FtsA.</text>
</comment>
<comment type="subunit">
    <text evidence="1">Homodimer. Interacts with FtsZ.</text>
</comment>
<comment type="subcellular location">
    <subcellularLocation>
        <location evidence="1">Cytoplasm</location>
    </subcellularLocation>
    <text evidence="1">Localizes to the division site, in a FtsZ-dependent manner.</text>
</comment>
<comment type="similarity">
    <text evidence="1">Belongs to the SepF family.</text>
</comment>